<gene>
    <name evidence="1" type="primary">deoB</name>
    <name type="ordered locus">YPTB0583</name>
</gene>
<proteinExistence type="inferred from homology"/>
<feature type="chain" id="PRO_0000258323" description="Phosphopentomutase">
    <location>
        <begin position="1"/>
        <end position="407"/>
    </location>
</feature>
<feature type="binding site" evidence="1">
    <location>
        <position position="10"/>
    </location>
    <ligand>
        <name>Mn(2+)</name>
        <dbReference type="ChEBI" id="CHEBI:29035"/>
        <label>1</label>
    </ligand>
</feature>
<feature type="binding site" evidence="1">
    <location>
        <position position="306"/>
    </location>
    <ligand>
        <name>Mn(2+)</name>
        <dbReference type="ChEBI" id="CHEBI:29035"/>
        <label>2</label>
    </ligand>
</feature>
<feature type="binding site" evidence="1">
    <location>
        <position position="311"/>
    </location>
    <ligand>
        <name>Mn(2+)</name>
        <dbReference type="ChEBI" id="CHEBI:29035"/>
        <label>2</label>
    </ligand>
</feature>
<feature type="binding site" evidence="1">
    <location>
        <position position="347"/>
    </location>
    <ligand>
        <name>Mn(2+)</name>
        <dbReference type="ChEBI" id="CHEBI:29035"/>
        <label>1</label>
    </ligand>
</feature>
<feature type="binding site" evidence="1">
    <location>
        <position position="348"/>
    </location>
    <ligand>
        <name>Mn(2+)</name>
        <dbReference type="ChEBI" id="CHEBI:29035"/>
        <label>1</label>
    </ligand>
</feature>
<feature type="binding site" evidence="1">
    <location>
        <position position="359"/>
    </location>
    <ligand>
        <name>Mn(2+)</name>
        <dbReference type="ChEBI" id="CHEBI:29035"/>
        <label>2</label>
    </ligand>
</feature>
<sequence>MKRTFIMVLDSFGIGASADAKKFGDEGADTLGHIAEACARGEANVGRSGPLTLPNLSRLGLGKAAEESTGTFPVGLDKNADIIGAYGYASELSSGKDTPSGHWEIAGVPVLFDWGYFSDVENSFPQELLDKLVKRANLPGYLGNCHSSGTVILDQLGEEHMKTGKPIFYTSADSVFQIACHEETFGLDRLYELCEIAREELTDGGYNIGRVIARPFIGDKPGHFQRTGNRHDLAVEPPAPTMLKKLVDEKGGEVVSIGKIADIYAQVGITQKVKATGLDALFDATIEEMKKAGDNTIVFTNFVDFDSSYGHRRDVAGYAAALELFDRRLPELMALVKEDDILILTADHGCDPTWPGTDHTREHIPVLVYGPKVKPGSLGHRETFADIGQTVAAYFGLSPMDYGKNML</sequence>
<organism>
    <name type="scientific">Yersinia pseudotuberculosis serotype I (strain IP32953)</name>
    <dbReference type="NCBI Taxonomy" id="273123"/>
    <lineage>
        <taxon>Bacteria</taxon>
        <taxon>Pseudomonadati</taxon>
        <taxon>Pseudomonadota</taxon>
        <taxon>Gammaproteobacteria</taxon>
        <taxon>Enterobacterales</taxon>
        <taxon>Yersiniaceae</taxon>
        <taxon>Yersinia</taxon>
    </lineage>
</organism>
<evidence type="ECO:0000255" key="1">
    <source>
        <dbReference type="HAMAP-Rule" id="MF_00740"/>
    </source>
</evidence>
<accession>Q66EV8</accession>
<keyword id="KW-0963">Cytoplasm</keyword>
<keyword id="KW-0413">Isomerase</keyword>
<keyword id="KW-0464">Manganese</keyword>
<keyword id="KW-0479">Metal-binding</keyword>
<reference key="1">
    <citation type="journal article" date="2004" name="Proc. Natl. Acad. Sci. U.S.A.">
        <title>Insights into the evolution of Yersinia pestis through whole-genome comparison with Yersinia pseudotuberculosis.</title>
        <authorList>
            <person name="Chain P.S.G."/>
            <person name="Carniel E."/>
            <person name="Larimer F.W."/>
            <person name="Lamerdin J."/>
            <person name="Stoutland P.O."/>
            <person name="Regala W.M."/>
            <person name="Georgescu A.M."/>
            <person name="Vergez L.M."/>
            <person name="Land M.L."/>
            <person name="Motin V.L."/>
            <person name="Brubaker R.R."/>
            <person name="Fowler J."/>
            <person name="Hinnebusch J."/>
            <person name="Marceau M."/>
            <person name="Medigue C."/>
            <person name="Simonet M."/>
            <person name="Chenal-Francisque V."/>
            <person name="Souza B."/>
            <person name="Dacheux D."/>
            <person name="Elliott J.M."/>
            <person name="Derbise A."/>
            <person name="Hauser L.J."/>
            <person name="Garcia E."/>
        </authorList>
    </citation>
    <scope>NUCLEOTIDE SEQUENCE [LARGE SCALE GENOMIC DNA]</scope>
    <source>
        <strain>IP32953</strain>
    </source>
</reference>
<comment type="function">
    <text evidence="1">Isomerase that catalyzes the conversion of deoxy-ribose 1-phosphate (dRib-1-P) and ribose 1-phosphate (Rib-1-P) to deoxy-ribose 5-phosphate (dRib-5-P) and ribose 5-phosphate (Rib-5-P), respectively.</text>
</comment>
<comment type="catalytic activity">
    <reaction evidence="1">
        <text>2-deoxy-alpha-D-ribose 1-phosphate = 2-deoxy-D-ribose 5-phosphate</text>
        <dbReference type="Rhea" id="RHEA:27658"/>
        <dbReference type="ChEBI" id="CHEBI:57259"/>
        <dbReference type="ChEBI" id="CHEBI:62877"/>
        <dbReference type="EC" id="5.4.2.7"/>
    </reaction>
</comment>
<comment type="catalytic activity">
    <reaction evidence="1">
        <text>alpha-D-ribose 1-phosphate = D-ribose 5-phosphate</text>
        <dbReference type="Rhea" id="RHEA:18793"/>
        <dbReference type="ChEBI" id="CHEBI:57720"/>
        <dbReference type="ChEBI" id="CHEBI:78346"/>
        <dbReference type="EC" id="5.4.2.7"/>
    </reaction>
</comment>
<comment type="cofactor">
    <cofactor evidence="1">
        <name>Mn(2+)</name>
        <dbReference type="ChEBI" id="CHEBI:29035"/>
    </cofactor>
    <text evidence="1">Binds 2 manganese ions.</text>
</comment>
<comment type="pathway">
    <text evidence="1">Carbohydrate degradation; 2-deoxy-D-ribose 1-phosphate degradation; D-glyceraldehyde 3-phosphate and acetaldehyde from 2-deoxy-alpha-D-ribose 1-phosphate: step 1/2.</text>
</comment>
<comment type="subcellular location">
    <subcellularLocation>
        <location evidence="1">Cytoplasm</location>
    </subcellularLocation>
</comment>
<comment type="similarity">
    <text evidence="1">Belongs to the phosphopentomutase family.</text>
</comment>
<protein>
    <recommendedName>
        <fullName evidence="1">Phosphopentomutase</fullName>
        <ecNumber evidence="1">5.4.2.7</ecNumber>
    </recommendedName>
    <alternativeName>
        <fullName evidence="1">Phosphodeoxyribomutase</fullName>
    </alternativeName>
</protein>
<dbReference type="EC" id="5.4.2.7" evidence="1"/>
<dbReference type="EMBL" id="BX936398">
    <property type="protein sequence ID" value="CAH19823.1"/>
    <property type="molecule type" value="Genomic_DNA"/>
</dbReference>
<dbReference type="RefSeq" id="WP_011191688.1">
    <property type="nucleotide sequence ID" value="NC_006155.1"/>
</dbReference>
<dbReference type="SMR" id="Q66EV8"/>
<dbReference type="GeneID" id="49787417"/>
<dbReference type="KEGG" id="ypo:BZ17_1976"/>
<dbReference type="KEGG" id="yps:YPTB0583"/>
<dbReference type="PATRIC" id="fig|273123.14.peg.2102"/>
<dbReference type="UniPathway" id="UPA00002">
    <property type="reaction ID" value="UER00467"/>
</dbReference>
<dbReference type="Proteomes" id="UP000001011">
    <property type="component" value="Chromosome"/>
</dbReference>
<dbReference type="GO" id="GO:0005829">
    <property type="term" value="C:cytosol"/>
    <property type="evidence" value="ECO:0007669"/>
    <property type="project" value="TreeGrafter"/>
</dbReference>
<dbReference type="GO" id="GO:0000287">
    <property type="term" value="F:magnesium ion binding"/>
    <property type="evidence" value="ECO:0007669"/>
    <property type="project" value="InterPro"/>
</dbReference>
<dbReference type="GO" id="GO:0030145">
    <property type="term" value="F:manganese ion binding"/>
    <property type="evidence" value="ECO:0007669"/>
    <property type="project" value="UniProtKB-UniRule"/>
</dbReference>
<dbReference type="GO" id="GO:0008973">
    <property type="term" value="F:phosphopentomutase activity"/>
    <property type="evidence" value="ECO:0007669"/>
    <property type="project" value="UniProtKB-UniRule"/>
</dbReference>
<dbReference type="GO" id="GO:0006018">
    <property type="term" value="P:2-deoxyribose 1-phosphate catabolic process"/>
    <property type="evidence" value="ECO:0007669"/>
    <property type="project" value="UniProtKB-UniRule"/>
</dbReference>
<dbReference type="GO" id="GO:0006015">
    <property type="term" value="P:5-phosphoribose 1-diphosphate biosynthetic process"/>
    <property type="evidence" value="ECO:0007669"/>
    <property type="project" value="UniProtKB-UniPathway"/>
</dbReference>
<dbReference type="GO" id="GO:0043094">
    <property type="term" value="P:metabolic compound salvage"/>
    <property type="evidence" value="ECO:0007669"/>
    <property type="project" value="InterPro"/>
</dbReference>
<dbReference type="GO" id="GO:0009117">
    <property type="term" value="P:nucleotide metabolic process"/>
    <property type="evidence" value="ECO:0007669"/>
    <property type="project" value="InterPro"/>
</dbReference>
<dbReference type="CDD" id="cd16009">
    <property type="entry name" value="PPM"/>
    <property type="match status" value="1"/>
</dbReference>
<dbReference type="FunFam" id="3.30.70.1250:FF:000001">
    <property type="entry name" value="Phosphopentomutase"/>
    <property type="match status" value="1"/>
</dbReference>
<dbReference type="Gene3D" id="3.40.720.10">
    <property type="entry name" value="Alkaline Phosphatase, subunit A"/>
    <property type="match status" value="1"/>
</dbReference>
<dbReference type="Gene3D" id="3.30.70.1250">
    <property type="entry name" value="Phosphopentomutase"/>
    <property type="match status" value="1"/>
</dbReference>
<dbReference type="HAMAP" id="MF_00740">
    <property type="entry name" value="Phosphopentomut"/>
    <property type="match status" value="1"/>
</dbReference>
<dbReference type="InterPro" id="IPR017850">
    <property type="entry name" value="Alkaline_phosphatase_core_sf"/>
</dbReference>
<dbReference type="InterPro" id="IPR010045">
    <property type="entry name" value="DeoB"/>
</dbReference>
<dbReference type="InterPro" id="IPR006124">
    <property type="entry name" value="Metalloenzyme"/>
</dbReference>
<dbReference type="InterPro" id="IPR024052">
    <property type="entry name" value="Phosphopentomutase_DeoB_cap_sf"/>
</dbReference>
<dbReference type="NCBIfam" id="TIGR01696">
    <property type="entry name" value="deoB"/>
    <property type="match status" value="1"/>
</dbReference>
<dbReference type="NCBIfam" id="NF003766">
    <property type="entry name" value="PRK05362.1"/>
    <property type="match status" value="1"/>
</dbReference>
<dbReference type="PANTHER" id="PTHR21110">
    <property type="entry name" value="PHOSPHOPENTOMUTASE"/>
    <property type="match status" value="1"/>
</dbReference>
<dbReference type="PANTHER" id="PTHR21110:SF0">
    <property type="entry name" value="PHOSPHOPENTOMUTASE"/>
    <property type="match status" value="1"/>
</dbReference>
<dbReference type="Pfam" id="PF01676">
    <property type="entry name" value="Metalloenzyme"/>
    <property type="match status" value="1"/>
</dbReference>
<dbReference type="PIRSF" id="PIRSF001491">
    <property type="entry name" value="Ppentomutase"/>
    <property type="match status" value="1"/>
</dbReference>
<dbReference type="SUPFAM" id="SSF53649">
    <property type="entry name" value="Alkaline phosphatase-like"/>
    <property type="match status" value="1"/>
</dbReference>
<dbReference type="SUPFAM" id="SSF143856">
    <property type="entry name" value="DeoB insert domain-like"/>
    <property type="match status" value="1"/>
</dbReference>
<name>DEOB_YERPS</name>